<proteinExistence type="inferred from homology"/>
<gene>
    <name evidence="1" type="primary">murG</name>
    <name type="ordered locus">BB_0767</name>
</gene>
<reference key="1">
    <citation type="journal article" date="1997" name="Nature">
        <title>Genomic sequence of a Lyme disease spirochaete, Borrelia burgdorferi.</title>
        <authorList>
            <person name="Fraser C.M."/>
            <person name="Casjens S."/>
            <person name="Huang W.M."/>
            <person name="Sutton G.G."/>
            <person name="Clayton R.A."/>
            <person name="Lathigra R."/>
            <person name="White O."/>
            <person name="Ketchum K.A."/>
            <person name="Dodson R.J."/>
            <person name="Hickey E.K."/>
            <person name="Gwinn M.L."/>
            <person name="Dougherty B.A."/>
            <person name="Tomb J.-F."/>
            <person name="Fleischmann R.D."/>
            <person name="Richardson D.L."/>
            <person name="Peterson J.D."/>
            <person name="Kerlavage A.R."/>
            <person name="Quackenbush J."/>
            <person name="Salzberg S.L."/>
            <person name="Hanson M."/>
            <person name="van Vugt R."/>
            <person name="Palmer N."/>
            <person name="Adams M.D."/>
            <person name="Gocayne J.D."/>
            <person name="Weidman J.F."/>
            <person name="Utterback T.R."/>
            <person name="Watthey L."/>
            <person name="McDonald L.A."/>
            <person name="Artiach P."/>
            <person name="Bowman C."/>
            <person name="Garland S.A."/>
            <person name="Fujii C."/>
            <person name="Cotton M.D."/>
            <person name="Horst K."/>
            <person name="Roberts K.M."/>
            <person name="Hatch B."/>
            <person name="Smith H.O."/>
            <person name="Venter J.C."/>
        </authorList>
    </citation>
    <scope>NUCLEOTIDE SEQUENCE [LARGE SCALE GENOMIC DNA]</scope>
    <source>
        <strain>ATCC 35210 / DSM 4680 / CIP 102532 / B31</strain>
    </source>
</reference>
<organism>
    <name type="scientific">Borreliella burgdorferi (strain ATCC 35210 / DSM 4680 / CIP 102532 / B31)</name>
    <name type="common">Borrelia burgdorferi</name>
    <dbReference type="NCBI Taxonomy" id="224326"/>
    <lineage>
        <taxon>Bacteria</taxon>
        <taxon>Pseudomonadati</taxon>
        <taxon>Spirochaetota</taxon>
        <taxon>Spirochaetia</taxon>
        <taxon>Spirochaetales</taxon>
        <taxon>Borreliaceae</taxon>
        <taxon>Borreliella</taxon>
    </lineage>
</organism>
<dbReference type="EC" id="2.4.1.227" evidence="1"/>
<dbReference type="EMBL" id="AE000783">
    <property type="protein sequence ID" value="AAC67113.1"/>
    <property type="molecule type" value="Genomic_DNA"/>
</dbReference>
<dbReference type="PIR" id="F70195">
    <property type="entry name" value="F70195"/>
</dbReference>
<dbReference type="RefSeq" id="NP_212901.1">
    <property type="nucleotide sequence ID" value="NC_001318.1"/>
</dbReference>
<dbReference type="RefSeq" id="WP_002657532.1">
    <property type="nucleotide sequence ID" value="NC_001318.1"/>
</dbReference>
<dbReference type="SMR" id="O51708"/>
<dbReference type="STRING" id="224326.BB_0767"/>
<dbReference type="CAZy" id="GT28">
    <property type="family name" value="Glycosyltransferase Family 28"/>
</dbReference>
<dbReference type="PaxDb" id="224326-BB_0767"/>
<dbReference type="DNASU" id="1195624"/>
<dbReference type="EnsemblBacteria" id="AAC67113">
    <property type="protein sequence ID" value="AAC67113"/>
    <property type="gene ID" value="BB_0767"/>
</dbReference>
<dbReference type="GeneID" id="56567577"/>
<dbReference type="KEGG" id="bbu:BB_0767"/>
<dbReference type="PATRIC" id="fig|224326.49.peg.1158"/>
<dbReference type="HOGENOM" id="CLU_037404_0_0_12"/>
<dbReference type="OrthoDB" id="9808936at2"/>
<dbReference type="UniPathway" id="UPA00219"/>
<dbReference type="Proteomes" id="UP000001807">
    <property type="component" value="Chromosome"/>
</dbReference>
<dbReference type="GO" id="GO:0005886">
    <property type="term" value="C:plasma membrane"/>
    <property type="evidence" value="ECO:0007669"/>
    <property type="project" value="UniProtKB-SubCell"/>
</dbReference>
<dbReference type="GO" id="GO:0051991">
    <property type="term" value="F:UDP-N-acetyl-D-glucosamine:N-acetylmuramoyl-L-alanyl-D-glutamyl-meso-2,6-diaminopimelyl-D-alanyl-D-alanine-diphosphoundecaprenol 4-beta-N-acetylglucosaminlytransferase activity"/>
    <property type="evidence" value="ECO:0007669"/>
    <property type="project" value="RHEA"/>
</dbReference>
<dbReference type="GO" id="GO:0050511">
    <property type="term" value="F:undecaprenyldiphospho-muramoylpentapeptide beta-N-acetylglucosaminyltransferase activity"/>
    <property type="evidence" value="ECO:0007669"/>
    <property type="project" value="UniProtKB-UniRule"/>
</dbReference>
<dbReference type="GO" id="GO:0005975">
    <property type="term" value="P:carbohydrate metabolic process"/>
    <property type="evidence" value="ECO:0007669"/>
    <property type="project" value="InterPro"/>
</dbReference>
<dbReference type="GO" id="GO:0051301">
    <property type="term" value="P:cell division"/>
    <property type="evidence" value="ECO:0007669"/>
    <property type="project" value="UniProtKB-KW"/>
</dbReference>
<dbReference type="GO" id="GO:0071555">
    <property type="term" value="P:cell wall organization"/>
    <property type="evidence" value="ECO:0007669"/>
    <property type="project" value="UniProtKB-KW"/>
</dbReference>
<dbReference type="GO" id="GO:0030259">
    <property type="term" value="P:lipid glycosylation"/>
    <property type="evidence" value="ECO:0007669"/>
    <property type="project" value="UniProtKB-UniRule"/>
</dbReference>
<dbReference type="GO" id="GO:0009252">
    <property type="term" value="P:peptidoglycan biosynthetic process"/>
    <property type="evidence" value="ECO:0007669"/>
    <property type="project" value="UniProtKB-UniRule"/>
</dbReference>
<dbReference type="GO" id="GO:0008360">
    <property type="term" value="P:regulation of cell shape"/>
    <property type="evidence" value="ECO:0007669"/>
    <property type="project" value="UniProtKB-KW"/>
</dbReference>
<dbReference type="CDD" id="cd03785">
    <property type="entry name" value="GT28_MurG"/>
    <property type="match status" value="1"/>
</dbReference>
<dbReference type="Gene3D" id="3.40.50.2000">
    <property type="entry name" value="Glycogen Phosphorylase B"/>
    <property type="match status" value="2"/>
</dbReference>
<dbReference type="HAMAP" id="MF_00033">
    <property type="entry name" value="MurG"/>
    <property type="match status" value="1"/>
</dbReference>
<dbReference type="InterPro" id="IPR006009">
    <property type="entry name" value="GlcNAc_MurG"/>
</dbReference>
<dbReference type="InterPro" id="IPR007235">
    <property type="entry name" value="Glyco_trans_28_C"/>
</dbReference>
<dbReference type="InterPro" id="IPR004276">
    <property type="entry name" value="GlycoTrans_28_N"/>
</dbReference>
<dbReference type="NCBIfam" id="TIGR01133">
    <property type="entry name" value="murG"/>
    <property type="match status" value="1"/>
</dbReference>
<dbReference type="PANTHER" id="PTHR21015:SF27">
    <property type="entry name" value="UDP-N-ACETYLGLUCOSAMINE--N-ACETYLMURAMYL-(PENTAPEPTIDE) PYROPHOSPHORYL-UNDECAPRENOL N-ACETYLGLUCOSAMINE TRANSFERASE"/>
    <property type="match status" value="1"/>
</dbReference>
<dbReference type="PANTHER" id="PTHR21015">
    <property type="entry name" value="UDP-N-ACETYLGLUCOSAMINE--N-ACETYLMURAMYL-(PENTAPEPTIDE) PYROPHOSPHORYL-UNDECAPRENOL N-ACETYLGLUCOSAMINE TRANSFERASE 1"/>
    <property type="match status" value="1"/>
</dbReference>
<dbReference type="Pfam" id="PF04101">
    <property type="entry name" value="Glyco_tran_28_C"/>
    <property type="match status" value="1"/>
</dbReference>
<dbReference type="Pfam" id="PF03033">
    <property type="entry name" value="Glyco_transf_28"/>
    <property type="match status" value="1"/>
</dbReference>
<dbReference type="SUPFAM" id="SSF53756">
    <property type="entry name" value="UDP-Glycosyltransferase/glycogen phosphorylase"/>
    <property type="match status" value="1"/>
</dbReference>
<protein>
    <recommendedName>
        <fullName evidence="1">UDP-N-acetylglucosamine--N-acetylmuramyl-(pentapeptide) pyrophosphoryl-undecaprenol N-acetylglucosamine transferase</fullName>
        <ecNumber evidence="1">2.4.1.227</ecNumber>
    </recommendedName>
    <alternativeName>
        <fullName evidence="1">Undecaprenyl-PP-MurNAc-pentapeptide-UDPGlcNAc GlcNAc transferase</fullName>
    </alternativeName>
</protein>
<name>MURG_BORBU</name>
<comment type="function">
    <text evidence="1">Cell wall formation. Catalyzes the transfer of a GlcNAc subunit on undecaprenyl-pyrophosphoryl-MurNAc-pentapeptide (lipid intermediate I) to form undecaprenyl-pyrophosphoryl-MurNAc-(pentapeptide)GlcNAc (lipid intermediate II).</text>
</comment>
<comment type="catalytic activity">
    <reaction evidence="1">
        <text>di-trans,octa-cis-undecaprenyl diphospho-N-acetyl-alpha-D-muramoyl-L-alanyl-D-glutamyl-meso-2,6-diaminopimeloyl-D-alanyl-D-alanine + UDP-N-acetyl-alpha-D-glucosamine = di-trans,octa-cis-undecaprenyl diphospho-[N-acetyl-alpha-D-glucosaminyl-(1-&gt;4)]-N-acetyl-alpha-D-muramoyl-L-alanyl-D-glutamyl-meso-2,6-diaminopimeloyl-D-alanyl-D-alanine + UDP + H(+)</text>
        <dbReference type="Rhea" id="RHEA:31227"/>
        <dbReference type="ChEBI" id="CHEBI:15378"/>
        <dbReference type="ChEBI" id="CHEBI:57705"/>
        <dbReference type="ChEBI" id="CHEBI:58223"/>
        <dbReference type="ChEBI" id="CHEBI:61387"/>
        <dbReference type="ChEBI" id="CHEBI:61388"/>
        <dbReference type="EC" id="2.4.1.227"/>
    </reaction>
</comment>
<comment type="pathway">
    <text evidence="1">Cell wall biogenesis; peptidoglycan biosynthesis.</text>
</comment>
<comment type="subcellular location">
    <subcellularLocation>
        <location evidence="1">Cell inner membrane</location>
        <topology evidence="1">Peripheral membrane protein</topology>
        <orientation evidence="1">Cytoplasmic side</orientation>
    </subcellularLocation>
</comment>
<comment type="similarity">
    <text evidence="1">Belongs to the glycosyltransferase 28 family. MurG subfamily.</text>
</comment>
<evidence type="ECO:0000255" key="1">
    <source>
        <dbReference type="HAMAP-Rule" id="MF_00033"/>
    </source>
</evidence>
<sequence length="363" mass="41118">MSNKKIIFFTGGGTGGHVFPGISIIQKLKEFDNEIEFFWIGKKNSIEEKLIKEQDNIKFISIPCGKLRRYFSFKNFTDFFKVILGIIKSFYVLKKYKPQLIYATGGFVSTPAIIASSLLKIKSITHEMDLDPGLATKINSKFANNIHISFKESEKYFKNYKNIIYTGSPIRREFLNPDPKIIKQLTQNTNKPIISILGGSLGANALNNLALCIKKDAEIYFIHQSGKNLNDLSEKNYLRRQFFNAEEMASIVKFSNLIISRAGAGAIKEFANAGACAILIPFKKGSRGDQIKNAKLLTNQNACIYIDEDEILNINILKIIKKTLKDREKINSLKENIKKFNNKHSSTLIAKLLIKDIKETKSK</sequence>
<keyword id="KW-0131">Cell cycle</keyword>
<keyword id="KW-0132">Cell division</keyword>
<keyword id="KW-0997">Cell inner membrane</keyword>
<keyword id="KW-1003">Cell membrane</keyword>
<keyword id="KW-0133">Cell shape</keyword>
<keyword id="KW-0961">Cell wall biogenesis/degradation</keyword>
<keyword id="KW-0328">Glycosyltransferase</keyword>
<keyword id="KW-0472">Membrane</keyword>
<keyword id="KW-0573">Peptidoglycan synthesis</keyword>
<keyword id="KW-1185">Reference proteome</keyword>
<keyword id="KW-0808">Transferase</keyword>
<accession>O51708</accession>
<feature type="chain" id="PRO_0000109147" description="UDP-N-acetylglucosamine--N-acetylmuramyl-(pentapeptide) pyrophosphoryl-undecaprenol N-acetylglucosamine transferase">
    <location>
        <begin position="1"/>
        <end position="363"/>
    </location>
</feature>
<feature type="binding site" evidence="1">
    <location>
        <begin position="14"/>
        <end position="16"/>
    </location>
    <ligand>
        <name>UDP-N-acetyl-alpha-D-glucosamine</name>
        <dbReference type="ChEBI" id="CHEBI:57705"/>
    </ligand>
</feature>
<feature type="binding site" evidence="1">
    <location>
        <position position="171"/>
    </location>
    <ligand>
        <name>UDP-N-acetyl-alpha-D-glucosamine</name>
        <dbReference type="ChEBI" id="CHEBI:57705"/>
    </ligand>
</feature>
<feature type="binding site" evidence="1">
    <location>
        <position position="200"/>
    </location>
    <ligand>
        <name>UDP-N-acetyl-alpha-D-glucosamine</name>
        <dbReference type="ChEBI" id="CHEBI:57705"/>
    </ligand>
</feature>
<feature type="binding site" evidence="1">
    <location>
        <position position="290"/>
    </location>
    <ligand>
        <name>UDP-N-acetyl-alpha-D-glucosamine</name>
        <dbReference type="ChEBI" id="CHEBI:57705"/>
    </ligand>
</feature>